<name>BTB3_SCHPO</name>
<protein>
    <recommendedName>
        <fullName>BTB/POZ domain-containing protein 3</fullName>
    </recommendedName>
</protein>
<accession>Q10225</accession>
<sequence>MASQDQNTGTTHVELQGGENSKKLFSKYDLWSKAMDEKKLSSSLFTVNDTQEFLELCEACRRGDLEVVKSLVENYNTPINQVDQFDYSPLVLASLCGHEPVVKFLLENGALCERDTFQGERCLYGALNDNIRRMLLSYDITKAIDESQPYASHITSLLSNSALHFTTDIVFAGQYGRVFAHKFYLAARSSYFKSKFSKLGPSEHEIEVKHFAKEFESILRYLYLDTNAVFTKQYNNALLSIGKKFQLNDFIALYEKDREQLHSRDWKKIQLAKTQNDLGEFLDYIISNYKVPIESLNQPSDQYSFHDAYLQSYTHRYPVHRAIMCRCEYFLDMLAGPFLESNQELPVLSLPFSSSVVEIVLKFLYTDKTDIAPELALDVVYVADMLSLDKDRSLKSLASIVITKQEEPIDSIYDILRTAWDTSTPRLEQYASEYMANHLEHLIDDPEFCELVKESADRILQRQETDTIELIDDIRYFLSKRFGIYHEDLCIDGVVDTLTPYESEYNQKMEMIDDLLDKLELQA</sequence>
<dbReference type="EMBL" id="CU329670">
    <property type="protein sequence ID" value="CAA93544.1"/>
    <property type="molecule type" value="Genomic_DNA"/>
</dbReference>
<dbReference type="PIR" id="T37624">
    <property type="entry name" value="T37624"/>
</dbReference>
<dbReference type="RefSeq" id="NP_593682.1">
    <property type="nucleotide sequence ID" value="NM_001019114.2"/>
</dbReference>
<dbReference type="SMR" id="Q10225"/>
<dbReference type="BioGRID" id="279317">
    <property type="interactions" value="4"/>
</dbReference>
<dbReference type="FunCoup" id="Q10225">
    <property type="interactions" value="22"/>
</dbReference>
<dbReference type="IntAct" id="Q10225">
    <property type="interactions" value="2"/>
</dbReference>
<dbReference type="STRING" id="284812.Q10225"/>
<dbReference type="PaxDb" id="4896-SPAC13D6.04c.1"/>
<dbReference type="EnsemblFungi" id="SPAC13D6.04c.1">
    <property type="protein sequence ID" value="SPAC13D6.04c.1:pep"/>
    <property type="gene ID" value="SPAC13D6.04c"/>
</dbReference>
<dbReference type="GeneID" id="2542872"/>
<dbReference type="KEGG" id="spo:2542872"/>
<dbReference type="PomBase" id="SPAC13D6.04c">
    <property type="gene designation" value="btb3"/>
</dbReference>
<dbReference type="VEuPathDB" id="FungiDB:SPAC13D6.04c"/>
<dbReference type="eggNOG" id="KOG0511">
    <property type="taxonomic scope" value="Eukaryota"/>
</dbReference>
<dbReference type="HOGENOM" id="CLU_022885_2_0_1"/>
<dbReference type="InParanoid" id="Q10225"/>
<dbReference type="OMA" id="EGARCIY"/>
<dbReference type="PhylomeDB" id="Q10225"/>
<dbReference type="UniPathway" id="UPA00143"/>
<dbReference type="PRO" id="PR:Q10225"/>
<dbReference type="Proteomes" id="UP000002485">
    <property type="component" value="Chromosome I"/>
</dbReference>
<dbReference type="GO" id="GO:0005737">
    <property type="term" value="C:cytoplasm"/>
    <property type="evidence" value="ECO:0000318"/>
    <property type="project" value="GO_Central"/>
</dbReference>
<dbReference type="GO" id="GO:0005829">
    <property type="term" value="C:cytosol"/>
    <property type="evidence" value="ECO:0007005"/>
    <property type="project" value="PomBase"/>
</dbReference>
<dbReference type="GO" id="GO:0005634">
    <property type="term" value="C:nucleus"/>
    <property type="evidence" value="ECO:0000250"/>
    <property type="project" value="PomBase"/>
</dbReference>
<dbReference type="GO" id="GO:0000151">
    <property type="term" value="C:ubiquitin ligase complex"/>
    <property type="evidence" value="ECO:0000353"/>
    <property type="project" value="PomBase"/>
</dbReference>
<dbReference type="GO" id="GO:0043161">
    <property type="term" value="P:proteasome-mediated ubiquitin-dependent protein catabolic process"/>
    <property type="evidence" value="ECO:0000250"/>
    <property type="project" value="PomBase"/>
</dbReference>
<dbReference type="GO" id="GO:0016567">
    <property type="term" value="P:protein ubiquitination"/>
    <property type="evidence" value="ECO:0007669"/>
    <property type="project" value="UniProtKB-UniPathway"/>
</dbReference>
<dbReference type="CDD" id="cd18497">
    <property type="entry name" value="BACK_ABTB1_BPOZ"/>
    <property type="match status" value="1"/>
</dbReference>
<dbReference type="CDD" id="cd18296">
    <property type="entry name" value="BTB2_POZ_ABTB1_BPOZ1"/>
    <property type="match status" value="1"/>
</dbReference>
<dbReference type="CDD" id="cd18186">
    <property type="entry name" value="BTB_POZ_ZBTB_KLHL-like"/>
    <property type="match status" value="1"/>
</dbReference>
<dbReference type="Gene3D" id="1.25.40.20">
    <property type="entry name" value="Ankyrin repeat-containing domain"/>
    <property type="match status" value="1"/>
</dbReference>
<dbReference type="Gene3D" id="3.30.710.10">
    <property type="entry name" value="Potassium Channel Kv1.1, Chain A"/>
    <property type="match status" value="2"/>
</dbReference>
<dbReference type="InterPro" id="IPR044515">
    <property type="entry name" value="ABTB1"/>
</dbReference>
<dbReference type="InterPro" id="IPR002110">
    <property type="entry name" value="Ankyrin_rpt"/>
</dbReference>
<dbReference type="InterPro" id="IPR036770">
    <property type="entry name" value="Ankyrin_rpt-contain_sf"/>
</dbReference>
<dbReference type="InterPro" id="IPR000210">
    <property type="entry name" value="BTB/POZ_dom"/>
</dbReference>
<dbReference type="InterPro" id="IPR011333">
    <property type="entry name" value="SKP1/BTB/POZ_sf"/>
</dbReference>
<dbReference type="PANTHER" id="PTHR46231">
    <property type="entry name" value="ANKYRIN REPEAT AND BTB/POZ DOMAIN-CONTAINING PROTEIN 1"/>
    <property type="match status" value="1"/>
</dbReference>
<dbReference type="PANTHER" id="PTHR46231:SF1">
    <property type="entry name" value="ANKYRIN REPEAT AND BTB_POZ DOMAIN-CONTAINING PROTEIN 1"/>
    <property type="match status" value="1"/>
</dbReference>
<dbReference type="Pfam" id="PF12796">
    <property type="entry name" value="Ank_2"/>
    <property type="match status" value="1"/>
</dbReference>
<dbReference type="Pfam" id="PF00651">
    <property type="entry name" value="BTB"/>
    <property type="match status" value="2"/>
</dbReference>
<dbReference type="SMART" id="SM00248">
    <property type="entry name" value="ANK"/>
    <property type="match status" value="2"/>
</dbReference>
<dbReference type="SMART" id="SM00225">
    <property type="entry name" value="BTB"/>
    <property type="match status" value="2"/>
</dbReference>
<dbReference type="SUPFAM" id="SSF48403">
    <property type="entry name" value="Ankyrin repeat"/>
    <property type="match status" value="1"/>
</dbReference>
<dbReference type="SUPFAM" id="SSF54695">
    <property type="entry name" value="POZ domain"/>
    <property type="match status" value="2"/>
</dbReference>
<dbReference type="PROSITE" id="PS50297">
    <property type="entry name" value="ANK_REP_REGION"/>
    <property type="match status" value="1"/>
</dbReference>
<dbReference type="PROSITE" id="PS50097">
    <property type="entry name" value="BTB"/>
    <property type="match status" value="2"/>
</dbReference>
<keyword id="KW-0040">ANK repeat</keyword>
<keyword id="KW-0963">Cytoplasm</keyword>
<keyword id="KW-1185">Reference proteome</keyword>
<keyword id="KW-0677">Repeat</keyword>
<keyword id="KW-0832">Ubl conjugation</keyword>
<keyword id="KW-0833">Ubl conjugation pathway</keyword>
<organism>
    <name type="scientific">Schizosaccharomyces pombe (strain 972 / ATCC 24843)</name>
    <name type="common">Fission yeast</name>
    <dbReference type="NCBI Taxonomy" id="284812"/>
    <lineage>
        <taxon>Eukaryota</taxon>
        <taxon>Fungi</taxon>
        <taxon>Dikarya</taxon>
        <taxon>Ascomycota</taxon>
        <taxon>Taphrinomycotina</taxon>
        <taxon>Schizosaccharomycetes</taxon>
        <taxon>Schizosaccharomycetales</taxon>
        <taxon>Schizosaccharomycetaceae</taxon>
        <taxon>Schizosaccharomyces</taxon>
    </lineage>
</organism>
<evidence type="ECO:0000255" key="1">
    <source>
        <dbReference type="PROSITE-ProRule" id="PRU00037"/>
    </source>
</evidence>
<evidence type="ECO:0000269" key="2">
    <source>
    </source>
</evidence>
<evidence type="ECO:0000269" key="3">
    <source>
    </source>
</evidence>
<comment type="function">
    <text>Probable substrate-specific adapter of an E3 ubiquitin-protein ligase complex which mediates the ubiquitination and subsequent proteasomal degradation of target proteins.</text>
</comment>
<comment type="pathway">
    <text>Protein modification; protein ubiquitination.</text>
</comment>
<comment type="subunit">
    <text evidence="2">Interacts with cul3.</text>
</comment>
<comment type="interaction">
    <interactant intactId="EBI-3648208">
        <id>Q10225</id>
    </interactant>
    <interactant intactId="EBI-3647930">
        <id>Q09760</id>
        <label>cul3</label>
    </interactant>
    <organismsDiffer>false</organismsDiffer>
    <experiments>4</experiments>
</comment>
<comment type="subcellular location">
    <subcellularLocation>
        <location evidence="3">Cytoplasm</location>
    </subcellularLocation>
</comment>
<comment type="PTM">
    <text evidence="2">Ubiquitinated and targeted for cul3-dependent degradation.</text>
</comment>
<reference key="1">
    <citation type="journal article" date="2002" name="Nature">
        <title>The genome sequence of Schizosaccharomyces pombe.</title>
        <authorList>
            <person name="Wood V."/>
            <person name="Gwilliam R."/>
            <person name="Rajandream M.A."/>
            <person name="Lyne M.H."/>
            <person name="Lyne R."/>
            <person name="Stewart A."/>
            <person name="Sgouros J.G."/>
            <person name="Peat N."/>
            <person name="Hayles J."/>
            <person name="Baker S.G."/>
            <person name="Basham D."/>
            <person name="Bowman S."/>
            <person name="Brooks K."/>
            <person name="Brown D."/>
            <person name="Brown S."/>
            <person name="Chillingworth T."/>
            <person name="Churcher C.M."/>
            <person name="Collins M."/>
            <person name="Connor R."/>
            <person name="Cronin A."/>
            <person name="Davis P."/>
            <person name="Feltwell T."/>
            <person name="Fraser A."/>
            <person name="Gentles S."/>
            <person name="Goble A."/>
            <person name="Hamlin N."/>
            <person name="Harris D.E."/>
            <person name="Hidalgo J."/>
            <person name="Hodgson G."/>
            <person name="Holroyd S."/>
            <person name="Hornsby T."/>
            <person name="Howarth S."/>
            <person name="Huckle E.J."/>
            <person name="Hunt S."/>
            <person name="Jagels K."/>
            <person name="James K.D."/>
            <person name="Jones L."/>
            <person name="Jones M."/>
            <person name="Leather S."/>
            <person name="McDonald S."/>
            <person name="McLean J."/>
            <person name="Mooney P."/>
            <person name="Moule S."/>
            <person name="Mungall K.L."/>
            <person name="Murphy L.D."/>
            <person name="Niblett D."/>
            <person name="Odell C."/>
            <person name="Oliver K."/>
            <person name="O'Neil S."/>
            <person name="Pearson D."/>
            <person name="Quail M.A."/>
            <person name="Rabbinowitsch E."/>
            <person name="Rutherford K.M."/>
            <person name="Rutter S."/>
            <person name="Saunders D."/>
            <person name="Seeger K."/>
            <person name="Sharp S."/>
            <person name="Skelton J."/>
            <person name="Simmonds M.N."/>
            <person name="Squares R."/>
            <person name="Squares S."/>
            <person name="Stevens K."/>
            <person name="Taylor K."/>
            <person name="Taylor R.G."/>
            <person name="Tivey A."/>
            <person name="Walsh S.V."/>
            <person name="Warren T."/>
            <person name="Whitehead S."/>
            <person name="Woodward J.R."/>
            <person name="Volckaert G."/>
            <person name="Aert R."/>
            <person name="Robben J."/>
            <person name="Grymonprez B."/>
            <person name="Weltjens I."/>
            <person name="Vanstreels E."/>
            <person name="Rieger M."/>
            <person name="Schaefer M."/>
            <person name="Mueller-Auer S."/>
            <person name="Gabel C."/>
            <person name="Fuchs M."/>
            <person name="Duesterhoeft A."/>
            <person name="Fritzc C."/>
            <person name="Holzer E."/>
            <person name="Moestl D."/>
            <person name="Hilbert H."/>
            <person name="Borzym K."/>
            <person name="Langer I."/>
            <person name="Beck A."/>
            <person name="Lehrach H."/>
            <person name="Reinhardt R."/>
            <person name="Pohl T.M."/>
            <person name="Eger P."/>
            <person name="Zimmermann W."/>
            <person name="Wedler H."/>
            <person name="Wambutt R."/>
            <person name="Purnelle B."/>
            <person name="Goffeau A."/>
            <person name="Cadieu E."/>
            <person name="Dreano S."/>
            <person name="Gloux S."/>
            <person name="Lelaure V."/>
            <person name="Mottier S."/>
            <person name="Galibert F."/>
            <person name="Aves S.J."/>
            <person name="Xiang Z."/>
            <person name="Hunt C."/>
            <person name="Moore K."/>
            <person name="Hurst S.M."/>
            <person name="Lucas M."/>
            <person name="Rochet M."/>
            <person name="Gaillardin C."/>
            <person name="Tallada V.A."/>
            <person name="Garzon A."/>
            <person name="Thode G."/>
            <person name="Daga R.R."/>
            <person name="Cruzado L."/>
            <person name="Jimenez J."/>
            <person name="Sanchez M."/>
            <person name="del Rey F."/>
            <person name="Benito J."/>
            <person name="Dominguez A."/>
            <person name="Revuelta J.L."/>
            <person name="Moreno S."/>
            <person name="Armstrong J."/>
            <person name="Forsburg S.L."/>
            <person name="Cerutti L."/>
            <person name="Lowe T."/>
            <person name="McCombie W.R."/>
            <person name="Paulsen I."/>
            <person name="Potashkin J."/>
            <person name="Shpakovski G.V."/>
            <person name="Ussery D."/>
            <person name="Barrell B.G."/>
            <person name="Nurse P."/>
        </authorList>
    </citation>
    <scope>NUCLEOTIDE SEQUENCE [LARGE SCALE GENOMIC DNA]</scope>
    <source>
        <strain>972 / ATCC 24843</strain>
    </source>
</reference>
<reference key="2">
    <citation type="journal article" date="2003" name="Mol. Cell">
        <title>BTB/POZ domain proteins are putative substrate adaptors for cullin 3 ubiquitin ligases.</title>
        <authorList>
            <person name="Geyer R."/>
            <person name="Wee S."/>
            <person name="Anderson S."/>
            <person name="Yates J. III"/>
            <person name="Wolf D.A."/>
        </authorList>
    </citation>
    <scope>INTERACTION WITH CUL3</scope>
    <scope>UBIQUITINATION</scope>
</reference>
<reference key="3">
    <citation type="journal article" date="2006" name="Nat. Biotechnol.">
        <title>ORFeome cloning and global analysis of protein localization in the fission yeast Schizosaccharomyces pombe.</title>
        <authorList>
            <person name="Matsuyama A."/>
            <person name="Arai R."/>
            <person name="Yashiroda Y."/>
            <person name="Shirai A."/>
            <person name="Kamata A."/>
            <person name="Sekido S."/>
            <person name="Kobayashi Y."/>
            <person name="Hashimoto A."/>
            <person name="Hamamoto M."/>
            <person name="Hiraoka Y."/>
            <person name="Horinouchi S."/>
            <person name="Yoshida M."/>
        </authorList>
    </citation>
    <scope>SUBCELLULAR LOCATION [LARGE SCALE ANALYSIS]</scope>
</reference>
<feature type="chain" id="PRO_0000067248" description="BTB/POZ domain-containing protein 3">
    <location>
        <begin position="1"/>
        <end position="523"/>
    </location>
</feature>
<feature type="repeat" description="ANK">
    <location>
        <begin position="85"/>
        <end position="114"/>
    </location>
</feature>
<feature type="domain" description="BTB 1" evidence="1">
    <location>
        <begin position="167"/>
        <end position="223"/>
    </location>
</feature>
<feature type="domain" description="BTB 2" evidence="1">
    <location>
        <begin position="306"/>
        <end position="373"/>
    </location>
</feature>
<proteinExistence type="evidence at protein level"/>
<gene>
    <name type="primary">btb3</name>
    <name type="ORF">SPAC13D6.04c</name>
</gene>